<name>WETA_ASPOR</name>
<gene>
    <name evidence="4" type="primary">wetA</name>
    <name type="ORF">AO090009000260</name>
</gene>
<accession>Q2UUM2</accession>
<organism>
    <name type="scientific">Aspergillus oryzae (strain ATCC 42149 / RIB 40)</name>
    <name type="common">Yellow koji mold</name>
    <dbReference type="NCBI Taxonomy" id="510516"/>
    <lineage>
        <taxon>Eukaryota</taxon>
        <taxon>Fungi</taxon>
        <taxon>Dikarya</taxon>
        <taxon>Ascomycota</taxon>
        <taxon>Pezizomycotina</taxon>
        <taxon>Eurotiomycetes</taxon>
        <taxon>Eurotiomycetidae</taxon>
        <taxon>Eurotiales</taxon>
        <taxon>Aspergillaceae</taxon>
        <taxon>Aspergillus</taxon>
        <taxon>Aspergillus subgen. Circumdati</taxon>
    </lineage>
</organism>
<protein>
    <recommendedName>
        <fullName evidence="5">Developmental regulatory protein wetA</fullName>
    </recommendedName>
</protein>
<dbReference type="EMBL" id="BA000049">
    <property type="protein sequence ID" value="BAE54743.1"/>
    <property type="molecule type" value="Genomic_DNA"/>
</dbReference>
<dbReference type="RefSeq" id="XP_001816745.1">
    <property type="nucleotide sequence ID" value="XM_001816693.1"/>
</dbReference>
<dbReference type="STRING" id="510516.Q2UUM2"/>
<dbReference type="EnsemblFungi" id="BAE54743">
    <property type="protein sequence ID" value="BAE54743"/>
    <property type="gene ID" value="AO090009000260"/>
</dbReference>
<dbReference type="GeneID" id="5988675"/>
<dbReference type="KEGG" id="aor:AO090009000260"/>
<dbReference type="VEuPathDB" id="FungiDB:AO090009000260"/>
<dbReference type="HOGENOM" id="CLU_030750_0_0_1"/>
<dbReference type="OMA" id="MFAQPFD"/>
<dbReference type="OrthoDB" id="111187at5052"/>
<dbReference type="Proteomes" id="UP000006564">
    <property type="component" value="Chromosome 1"/>
</dbReference>
<dbReference type="GO" id="GO:0048315">
    <property type="term" value="P:conidium formation"/>
    <property type="evidence" value="ECO:0007669"/>
    <property type="project" value="UniProtKB-KW"/>
</dbReference>
<dbReference type="GO" id="GO:0030435">
    <property type="term" value="P:sporulation resulting in formation of a cellular spore"/>
    <property type="evidence" value="ECO:0007669"/>
    <property type="project" value="UniProtKB-KW"/>
</dbReference>
<dbReference type="InterPro" id="IPR040112">
    <property type="entry name" value="WetA"/>
</dbReference>
<dbReference type="PANTHER" id="PTHR22934:SF25">
    <property type="entry name" value="DEVELOPMENTAL REGULATORY PROTEIN WETA"/>
    <property type="match status" value="1"/>
</dbReference>
<dbReference type="PANTHER" id="PTHR22934">
    <property type="entry name" value="PROTEIN ESC1/WETA-RELATED"/>
    <property type="match status" value="1"/>
</dbReference>
<keyword id="KW-0010">Activator</keyword>
<keyword id="KW-0183">Conidiation</keyword>
<keyword id="KW-1185">Reference proteome</keyword>
<keyword id="KW-0749">Sporulation</keyword>
<keyword id="KW-0804">Transcription</keyword>
<keyword id="KW-0805">Transcription regulation</keyword>
<evidence type="ECO:0000250" key="1">
    <source>
        <dbReference type="UniProtKB" id="P22022"/>
    </source>
</evidence>
<evidence type="ECO:0000256" key="2">
    <source>
        <dbReference type="SAM" id="MobiDB-lite"/>
    </source>
</evidence>
<evidence type="ECO:0000269" key="3">
    <source>
    </source>
</evidence>
<evidence type="ECO:0000303" key="4">
    <source>
    </source>
</evidence>
<evidence type="ECO:0000305" key="5"/>
<sequence length="563" mass="61439">MFAQPFDHSFNNDDLFSQYVNIDGSSTDGNKDVSFPSDFDQFFSLDSLSSNCGEQSPIISTSKQQTHPSPQWAKDFWSLPPDAPSSLGQAPLAFQDTVHPSAVSDLNVNLEASSTTCPAETRSSPTTPPGTPRRKPKSALVTPKSIQRHREPNGRRGLQHKQSFSPSLTRPSQFQKGRMAYQEAWAHRLQNLNFLRSADDRFPLSPPPSDILPQQENIAADNSAVHIHHSGDSTEMHHHFDTSIFTPSPAISMPSPCTGVLSRQQARYLNHSNNSTVTSSPPSADDIFPSPHSSDPQSMSSWHSDALGTPGLFTPDLQSHDAQAWWPPMNARVPQRQPSYQQVVASPPPQQPIQNTTHQHDLANSQHDILQGGLMIQMDPSAYDMTATANSSFSSTTMAPTASSCQENHTYSHVPTAHAKYVDASSFATPQLHPQSRSPSLSPRADRSPKNGLAMHHSITMKAQRRQPGRKISSNSMNVPKPVKGLNGSGSPKGAKSVTVSFVNFTLNDSQKILTGVAPSGSSKTKARREQEARDRRRRISEAALNAVRKAGGDVEALEAVMF</sequence>
<feature type="chain" id="PRO_0000435927" description="Developmental regulatory protein wetA">
    <location>
        <begin position="1"/>
        <end position="563"/>
    </location>
</feature>
<feature type="region of interest" description="Disordered" evidence="2">
    <location>
        <begin position="54"/>
        <end position="81"/>
    </location>
</feature>
<feature type="region of interest" description="Disordered" evidence="2">
    <location>
        <begin position="112"/>
        <end position="176"/>
    </location>
</feature>
<feature type="region of interest" description="Disordered" evidence="2">
    <location>
        <begin position="272"/>
        <end position="318"/>
    </location>
</feature>
<feature type="region of interest" description="Disordered" evidence="2">
    <location>
        <begin position="334"/>
        <end position="356"/>
    </location>
</feature>
<feature type="region of interest" description="Disordered" evidence="2">
    <location>
        <begin position="430"/>
        <end position="494"/>
    </location>
</feature>
<feature type="region of interest" description="Disordered" evidence="2">
    <location>
        <begin position="516"/>
        <end position="538"/>
    </location>
</feature>
<feature type="compositionally biased region" description="Polar residues" evidence="2">
    <location>
        <begin position="54"/>
        <end position="69"/>
    </location>
</feature>
<feature type="compositionally biased region" description="Polar residues" evidence="2">
    <location>
        <begin position="160"/>
        <end position="175"/>
    </location>
</feature>
<feature type="compositionally biased region" description="Low complexity" evidence="2">
    <location>
        <begin position="272"/>
        <end position="305"/>
    </location>
</feature>
<feature type="compositionally biased region" description="Polar residues" evidence="2">
    <location>
        <begin position="430"/>
        <end position="441"/>
    </location>
</feature>
<reference key="1">
    <citation type="journal article" date="2005" name="Nature">
        <title>Genome sequencing and analysis of Aspergillus oryzae.</title>
        <authorList>
            <person name="Machida M."/>
            <person name="Asai K."/>
            <person name="Sano M."/>
            <person name="Tanaka T."/>
            <person name="Kumagai T."/>
            <person name="Terai G."/>
            <person name="Kusumoto K."/>
            <person name="Arima T."/>
            <person name="Akita O."/>
            <person name="Kashiwagi Y."/>
            <person name="Abe K."/>
            <person name="Gomi K."/>
            <person name="Horiuchi H."/>
            <person name="Kitamoto K."/>
            <person name="Kobayashi T."/>
            <person name="Takeuchi M."/>
            <person name="Denning D.W."/>
            <person name="Galagan J.E."/>
            <person name="Nierman W.C."/>
            <person name="Yu J."/>
            <person name="Archer D.B."/>
            <person name="Bennett J.W."/>
            <person name="Bhatnagar D."/>
            <person name="Cleveland T.E."/>
            <person name="Fedorova N.D."/>
            <person name="Gotoh O."/>
            <person name="Horikawa H."/>
            <person name="Hosoyama A."/>
            <person name="Ichinomiya M."/>
            <person name="Igarashi R."/>
            <person name="Iwashita K."/>
            <person name="Juvvadi P.R."/>
            <person name="Kato M."/>
            <person name="Kato Y."/>
            <person name="Kin T."/>
            <person name="Kokubun A."/>
            <person name="Maeda H."/>
            <person name="Maeyama N."/>
            <person name="Maruyama J."/>
            <person name="Nagasaki H."/>
            <person name="Nakajima T."/>
            <person name="Oda K."/>
            <person name="Okada K."/>
            <person name="Paulsen I."/>
            <person name="Sakamoto K."/>
            <person name="Sawano T."/>
            <person name="Takahashi M."/>
            <person name="Takase K."/>
            <person name="Terabayashi Y."/>
            <person name="Wortman J.R."/>
            <person name="Yamada O."/>
            <person name="Yamagata Y."/>
            <person name="Anazawa H."/>
            <person name="Hata Y."/>
            <person name="Koide Y."/>
            <person name="Komori T."/>
            <person name="Koyama Y."/>
            <person name="Minetoki T."/>
            <person name="Suharnan S."/>
            <person name="Tanaka A."/>
            <person name="Isono K."/>
            <person name="Kuhara S."/>
            <person name="Ogasawara N."/>
            <person name="Kikuchi H."/>
        </authorList>
    </citation>
    <scope>NUCLEOTIDE SEQUENCE [LARGE SCALE GENOMIC DNA]</scope>
    <source>
        <strain>ATCC 42149 / RIB 40</strain>
    </source>
</reference>
<reference key="2">
    <citation type="journal article" date="2010" name="Fungal Genet. Biol.">
        <title>Genetic analysis of conidiation regulatory pathways in koji-mold Aspergillus oryzae.</title>
        <authorList>
            <person name="Ogawa M."/>
            <person name="Tokuoka M."/>
            <person name="Jin F.J."/>
            <person name="Takahashi T."/>
            <person name="Koyama Y."/>
        </authorList>
    </citation>
    <scope>FUNCTION</scope>
    <scope>DISRUPTION PHENOTYPE</scope>
    <scope>INDUCTION</scope>
</reference>
<comment type="function">
    <text evidence="1 3">BrlA, abaA and wetA are pivotal regulators of conidiophore development and conidium maturation (PubMed:19850144). They act individually and together to regulate their own expression and that of numerous other sporulation-specific genes (By similarity).</text>
</comment>
<comment type="induction">
    <text evidence="3">Expression is controlled by abaA (PubMed:19850144).</text>
</comment>
<comment type="disruption phenotype">
    <text evidence="3">Loses conidial pigments and exhibits autolytic phenotype (PubMed:19850144).</text>
</comment>
<comment type="similarity">
    <text evidence="5">Belongs to the wetA family.</text>
</comment>
<proteinExistence type="evidence at transcript level"/>